<comment type="function">
    <text evidence="1">Endonuclease IV plays a role in DNA repair. It cleaves phosphodiester bonds at apurinic or apyrimidinic (AP) sites, generating a 3'-hydroxyl group and a 5'-terminal sugar phosphate.</text>
</comment>
<comment type="catalytic activity">
    <reaction evidence="1">
        <text>Endonucleolytic cleavage to 5'-phosphooligonucleotide end-products.</text>
        <dbReference type="EC" id="3.1.21.2"/>
    </reaction>
</comment>
<comment type="cofactor">
    <cofactor evidence="1">
        <name>Zn(2+)</name>
        <dbReference type="ChEBI" id="CHEBI:29105"/>
    </cofactor>
    <text evidence="1">Binds 3 Zn(2+) ions.</text>
</comment>
<comment type="similarity">
    <text evidence="1">Belongs to the AP endonuclease 2 family.</text>
</comment>
<feature type="chain" id="PRO_1000096907" description="Probable endonuclease 4">
    <location>
        <begin position="1"/>
        <end position="290"/>
    </location>
</feature>
<feature type="binding site" evidence="1">
    <location>
        <position position="66"/>
    </location>
    <ligand>
        <name>Zn(2+)</name>
        <dbReference type="ChEBI" id="CHEBI:29105"/>
        <label>1</label>
    </ligand>
</feature>
<feature type="binding site" evidence="1">
    <location>
        <position position="106"/>
    </location>
    <ligand>
        <name>Zn(2+)</name>
        <dbReference type="ChEBI" id="CHEBI:29105"/>
        <label>1</label>
    </ligand>
</feature>
<feature type="binding site" evidence="1">
    <location>
        <position position="143"/>
    </location>
    <ligand>
        <name>Zn(2+)</name>
        <dbReference type="ChEBI" id="CHEBI:29105"/>
        <label>1</label>
    </ligand>
</feature>
<feature type="binding site" evidence="1">
    <location>
        <position position="143"/>
    </location>
    <ligand>
        <name>Zn(2+)</name>
        <dbReference type="ChEBI" id="CHEBI:29105"/>
        <label>2</label>
    </ligand>
</feature>
<feature type="binding site" evidence="1">
    <location>
        <position position="179"/>
    </location>
    <ligand>
        <name>Zn(2+)</name>
        <dbReference type="ChEBI" id="CHEBI:29105"/>
        <label>2</label>
    </ligand>
</feature>
<feature type="binding site" evidence="1">
    <location>
        <position position="182"/>
    </location>
    <ligand>
        <name>Zn(2+)</name>
        <dbReference type="ChEBI" id="CHEBI:29105"/>
        <label>3</label>
    </ligand>
</feature>
<feature type="binding site" evidence="1">
    <location>
        <position position="216"/>
    </location>
    <ligand>
        <name>Zn(2+)</name>
        <dbReference type="ChEBI" id="CHEBI:29105"/>
        <label>2</label>
    </ligand>
</feature>
<feature type="binding site" evidence="1">
    <location>
        <position position="229"/>
    </location>
    <ligand>
        <name>Zn(2+)</name>
        <dbReference type="ChEBI" id="CHEBI:29105"/>
        <label>3</label>
    </ligand>
</feature>
<feature type="binding site" evidence="1">
    <location>
        <position position="231"/>
    </location>
    <ligand>
        <name>Zn(2+)</name>
        <dbReference type="ChEBI" id="CHEBI:29105"/>
        <label>3</label>
    </ligand>
</feature>
<feature type="binding site" evidence="1">
    <location>
        <position position="261"/>
    </location>
    <ligand>
        <name>Zn(2+)</name>
        <dbReference type="ChEBI" id="CHEBI:29105"/>
        <label>2</label>
    </ligand>
</feature>
<sequence>MRLGIHTFTSGSLETAALTAGDLGAATFQIFSASPRMWRARVPDPVQIKLLCAARERFSLSPLVIHTNYLVNLASLDPVIRAKSIDAFRGELQRAIAIGAEYLVVHPGSYRGHTVEEGIAAFALGLRDASAGLPPHQLTVLLENTAGAGCHLGGKFEELRSIRDLTAELTDLPIGYCLDTCHLLAAGFDIVTAPGLRATLRAAEAVLGLANVHVFHANDSRFPRGSHVDRHAHIGEGFIGADAFRRILTHPKLRRKPFILETPVDEPGDDRRNLDILKSLAGSKLPLPAR</sequence>
<keyword id="KW-0227">DNA damage</keyword>
<keyword id="KW-0234">DNA repair</keyword>
<keyword id="KW-0255">Endonuclease</keyword>
<keyword id="KW-0378">Hydrolase</keyword>
<keyword id="KW-0479">Metal-binding</keyword>
<keyword id="KW-0540">Nuclease</keyword>
<keyword id="KW-0862">Zinc</keyword>
<gene>
    <name evidence="1" type="primary">nfo</name>
    <name type="ordered locus">Acid_5984</name>
</gene>
<proteinExistence type="inferred from homology"/>
<accession>Q01TU5</accession>
<evidence type="ECO:0000255" key="1">
    <source>
        <dbReference type="HAMAP-Rule" id="MF_00152"/>
    </source>
</evidence>
<reference key="1">
    <citation type="journal article" date="2009" name="Appl. Environ. Microbiol.">
        <title>Three genomes from the phylum Acidobacteria provide insight into the lifestyles of these microorganisms in soils.</title>
        <authorList>
            <person name="Ward N.L."/>
            <person name="Challacombe J.F."/>
            <person name="Janssen P.H."/>
            <person name="Henrissat B."/>
            <person name="Coutinho P.M."/>
            <person name="Wu M."/>
            <person name="Xie G."/>
            <person name="Haft D.H."/>
            <person name="Sait M."/>
            <person name="Badger J."/>
            <person name="Barabote R.D."/>
            <person name="Bradley B."/>
            <person name="Brettin T.S."/>
            <person name="Brinkac L.M."/>
            <person name="Bruce D."/>
            <person name="Creasy T."/>
            <person name="Daugherty S.C."/>
            <person name="Davidsen T.M."/>
            <person name="DeBoy R.T."/>
            <person name="Detter J.C."/>
            <person name="Dodson R.J."/>
            <person name="Durkin A.S."/>
            <person name="Ganapathy A."/>
            <person name="Gwinn-Giglio M."/>
            <person name="Han C.S."/>
            <person name="Khouri H."/>
            <person name="Kiss H."/>
            <person name="Kothari S.P."/>
            <person name="Madupu R."/>
            <person name="Nelson K.E."/>
            <person name="Nelson W.C."/>
            <person name="Paulsen I."/>
            <person name="Penn K."/>
            <person name="Ren Q."/>
            <person name="Rosovitz M.J."/>
            <person name="Selengut J.D."/>
            <person name="Shrivastava S."/>
            <person name="Sullivan S.A."/>
            <person name="Tapia R."/>
            <person name="Thompson L.S."/>
            <person name="Watkins K.L."/>
            <person name="Yang Q."/>
            <person name="Yu C."/>
            <person name="Zafar N."/>
            <person name="Zhou L."/>
            <person name="Kuske C.R."/>
        </authorList>
    </citation>
    <scope>NUCLEOTIDE SEQUENCE [LARGE SCALE GENOMIC DNA]</scope>
    <source>
        <strain>Ellin6076</strain>
    </source>
</reference>
<organism>
    <name type="scientific">Solibacter usitatus (strain Ellin6076)</name>
    <dbReference type="NCBI Taxonomy" id="234267"/>
    <lineage>
        <taxon>Bacteria</taxon>
        <taxon>Pseudomonadati</taxon>
        <taxon>Acidobacteriota</taxon>
        <taxon>Terriglobia</taxon>
        <taxon>Bryobacterales</taxon>
        <taxon>Solibacteraceae</taxon>
        <taxon>Candidatus Solibacter</taxon>
    </lineage>
</organism>
<protein>
    <recommendedName>
        <fullName evidence="1">Probable endonuclease 4</fullName>
        <ecNumber evidence="1">3.1.21.2</ecNumber>
    </recommendedName>
    <alternativeName>
        <fullName evidence="1">Endodeoxyribonuclease IV</fullName>
    </alternativeName>
    <alternativeName>
        <fullName evidence="1">Endonuclease IV</fullName>
    </alternativeName>
</protein>
<dbReference type="EC" id="3.1.21.2" evidence="1"/>
<dbReference type="EMBL" id="CP000473">
    <property type="protein sequence ID" value="ABJ86925.1"/>
    <property type="molecule type" value="Genomic_DNA"/>
</dbReference>
<dbReference type="SMR" id="Q01TU5"/>
<dbReference type="FunCoup" id="Q01TU5">
    <property type="interactions" value="321"/>
</dbReference>
<dbReference type="STRING" id="234267.Acid_5984"/>
<dbReference type="KEGG" id="sus:Acid_5984"/>
<dbReference type="eggNOG" id="COG0648">
    <property type="taxonomic scope" value="Bacteria"/>
</dbReference>
<dbReference type="HOGENOM" id="CLU_025885_0_1_0"/>
<dbReference type="InParanoid" id="Q01TU5"/>
<dbReference type="OrthoDB" id="9805666at2"/>
<dbReference type="GO" id="GO:0008833">
    <property type="term" value="F:deoxyribonuclease IV (phage-T4-induced) activity"/>
    <property type="evidence" value="ECO:0007669"/>
    <property type="project" value="UniProtKB-UniRule"/>
</dbReference>
<dbReference type="GO" id="GO:0003677">
    <property type="term" value="F:DNA binding"/>
    <property type="evidence" value="ECO:0007669"/>
    <property type="project" value="InterPro"/>
</dbReference>
<dbReference type="GO" id="GO:0003906">
    <property type="term" value="F:DNA-(apurinic or apyrimidinic site) endonuclease activity"/>
    <property type="evidence" value="ECO:0007669"/>
    <property type="project" value="TreeGrafter"/>
</dbReference>
<dbReference type="GO" id="GO:0008081">
    <property type="term" value="F:phosphoric diester hydrolase activity"/>
    <property type="evidence" value="ECO:0007669"/>
    <property type="project" value="TreeGrafter"/>
</dbReference>
<dbReference type="GO" id="GO:0008270">
    <property type="term" value="F:zinc ion binding"/>
    <property type="evidence" value="ECO:0007669"/>
    <property type="project" value="UniProtKB-UniRule"/>
</dbReference>
<dbReference type="GO" id="GO:0006284">
    <property type="term" value="P:base-excision repair"/>
    <property type="evidence" value="ECO:0007669"/>
    <property type="project" value="TreeGrafter"/>
</dbReference>
<dbReference type="CDD" id="cd00019">
    <property type="entry name" value="AP2Ec"/>
    <property type="match status" value="1"/>
</dbReference>
<dbReference type="Gene3D" id="3.20.20.150">
    <property type="entry name" value="Divalent-metal-dependent TIM barrel enzymes"/>
    <property type="match status" value="1"/>
</dbReference>
<dbReference type="HAMAP" id="MF_00152">
    <property type="entry name" value="Nfo"/>
    <property type="match status" value="1"/>
</dbReference>
<dbReference type="InterPro" id="IPR001719">
    <property type="entry name" value="AP_endonuc_2"/>
</dbReference>
<dbReference type="InterPro" id="IPR018246">
    <property type="entry name" value="AP_endonuc_F2_Zn_BS"/>
</dbReference>
<dbReference type="InterPro" id="IPR036237">
    <property type="entry name" value="Xyl_isomerase-like_sf"/>
</dbReference>
<dbReference type="InterPro" id="IPR013022">
    <property type="entry name" value="Xyl_isomerase-like_TIM-brl"/>
</dbReference>
<dbReference type="NCBIfam" id="TIGR00587">
    <property type="entry name" value="nfo"/>
    <property type="match status" value="1"/>
</dbReference>
<dbReference type="PANTHER" id="PTHR21445:SF0">
    <property type="entry name" value="APURINIC-APYRIMIDINIC ENDONUCLEASE"/>
    <property type="match status" value="1"/>
</dbReference>
<dbReference type="PANTHER" id="PTHR21445">
    <property type="entry name" value="ENDONUCLEASE IV ENDODEOXYRIBONUCLEASE IV"/>
    <property type="match status" value="1"/>
</dbReference>
<dbReference type="Pfam" id="PF01261">
    <property type="entry name" value="AP_endonuc_2"/>
    <property type="match status" value="1"/>
</dbReference>
<dbReference type="SMART" id="SM00518">
    <property type="entry name" value="AP2Ec"/>
    <property type="match status" value="1"/>
</dbReference>
<dbReference type="SUPFAM" id="SSF51658">
    <property type="entry name" value="Xylose isomerase-like"/>
    <property type="match status" value="1"/>
</dbReference>
<dbReference type="PROSITE" id="PS00731">
    <property type="entry name" value="AP_NUCLEASE_F2_3"/>
    <property type="match status" value="1"/>
</dbReference>
<dbReference type="PROSITE" id="PS51432">
    <property type="entry name" value="AP_NUCLEASE_F2_4"/>
    <property type="match status" value="1"/>
</dbReference>
<name>END4_SOLUE</name>